<dbReference type="EMBL" id="AE014134">
    <property type="protein sequence ID" value="AAF51514.1"/>
    <property type="molecule type" value="Genomic_DNA"/>
</dbReference>
<dbReference type="EMBL" id="AE014134">
    <property type="protein sequence ID" value="AGB92350.1"/>
    <property type="molecule type" value="Genomic_DNA"/>
</dbReference>
<dbReference type="EMBL" id="BT023193">
    <property type="protein sequence ID" value="AAY55609.1"/>
    <property type="molecule type" value="mRNA"/>
</dbReference>
<dbReference type="RefSeq" id="NP_001259813.1">
    <property type="nucleotide sequence ID" value="NM_001272884.1"/>
</dbReference>
<dbReference type="RefSeq" id="NP_608515.1">
    <property type="nucleotide sequence ID" value="NM_134671.2"/>
</dbReference>
<dbReference type="SMR" id="Q9VPN2"/>
<dbReference type="IntAct" id="Q9VPN2">
    <property type="interactions" value="4"/>
</dbReference>
<dbReference type="STRING" id="7227.FBpp0303497"/>
<dbReference type="PaxDb" id="7227-FBpp0303497"/>
<dbReference type="DNASU" id="33199"/>
<dbReference type="EnsemblMetazoa" id="FBtr0078134">
    <property type="protein sequence ID" value="FBpp0077793"/>
    <property type="gene ID" value="FBgn0025686"/>
</dbReference>
<dbReference type="EnsemblMetazoa" id="FBtr0330647">
    <property type="protein sequence ID" value="FBpp0303497"/>
    <property type="gene ID" value="FBgn0025686"/>
</dbReference>
<dbReference type="GeneID" id="33199"/>
<dbReference type="KEGG" id="dme:Dmel_CG11592"/>
<dbReference type="UCSC" id="CG11592-RA">
    <property type="organism name" value="d. melanogaster"/>
</dbReference>
<dbReference type="AGR" id="FB:FBgn0025686"/>
<dbReference type="CTD" id="33199"/>
<dbReference type="FlyBase" id="FBgn0025686">
    <property type="gene designation" value="Amnionless"/>
</dbReference>
<dbReference type="VEuPathDB" id="VectorBase:FBgn0025686"/>
<dbReference type="eggNOG" id="ENOG502QUUQ">
    <property type="taxonomic scope" value="Eukaryota"/>
</dbReference>
<dbReference type="GeneTree" id="ENSGT00390000007463"/>
<dbReference type="HOGENOM" id="CLU_539993_0_0_1"/>
<dbReference type="InParanoid" id="Q9VPN2"/>
<dbReference type="OMA" id="RRWRWHH"/>
<dbReference type="OrthoDB" id="1898221at2759"/>
<dbReference type="PhylomeDB" id="Q9VPN2"/>
<dbReference type="Reactome" id="R-DME-9758881">
    <property type="pathway name" value="Uptake of dietary cobalamins into enterocytes"/>
</dbReference>
<dbReference type="BioGRID-ORCS" id="33199">
    <property type="hits" value="0 hits in 3 CRISPR screens"/>
</dbReference>
<dbReference type="GenomeRNAi" id="33199"/>
<dbReference type="PRO" id="PR:Q9VPN2"/>
<dbReference type="Proteomes" id="UP000000803">
    <property type="component" value="Chromosome 2L"/>
</dbReference>
<dbReference type="Bgee" id="FBgn0025686">
    <property type="expression patterns" value="Expressed in excretory cell and 12 other cell types or tissues"/>
</dbReference>
<dbReference type="GO" id="GO:0016324">
    <property type="term" value="C:apical plasma membrane"/>
    <property type="evidence" value="ECO:0000318"/>
    <property type="project" value="GO_Central"/>
</dbReference>
<dbReference type="GO" id="GO:0030139">
    <property type="term" value="C:endocytic vesicle"/>
    <property type="evidence" value="ECO:0000318"/>
    <property type="project" value="GO_Central"/>
</dbReference>
<dbReference type="GO" id="GO:0016020">
    <property type="term" value="C:membrane"/>
    <property type="evidence" value="ECO:0000255"/>
    <property type="project" value="FlyBase"/>
</dbReference>
<dbReference type="GO" id="GO:0043235">
    <property type="term" value="C:receptor complex"/>
    <property type="evidence" value="ECO:0000353"/>
    <property type="project" value="FlyBase"/>
</dbReference>
<dbReference type="GO" id="GO:0038024">
    <property type="term" value="F:cargo receptor activity"/>
    <property type="evidence" value="ECO:0000314"/>
    <property type="project" value="FlyBase"/>
</dbReference>
<dbReference type="GO" id="GO:0072583">
    <property type="term" value="P:clathrin-dependent endocytosis"/>
    <property type="evidence" value="ECO:0000315"/>
    <property type="project" value="FlyBase"/>
</dbReference>
<dbReference type="GO" id="GO:0097206">
    <property type="term" value="P:nephrocyte filtration"/>
    <property type="evidence" value="ECO:0000315"/>
    <property type="project" value="FlyBase"/>
</dbReference>
<dbReference type="GO" id="GO:0008104">
    <property type="term" value="P:protein localization"/>
    <property type="evidence" value="ECO:0000318"/>
    <property type="project" value="GO_Central"/>
</dbReference>
<dbReference type="GO" id="GO:0015031">
    <property type="term" value="P:protein transport"/>
    <property type="evidence" value="ECO:0007669"/>
    <property type="project" value="UniProtKB-KW"/>
</dbReference>
<dbReference type="GO" id="GO:0006898">
    <property type="term" value="P:receptor-mediated endocytosis"/>
    <property type="evidence" value="ECO:0000318"/>
    <property type="project" value="GO_Central"/>
</dbReference>
<dbReference type="GO" id="GO:0097017">
    <property type="term" value="P:renal protein absorption"/>
    <property type="evidence" value="ECO:0000315"/>
    <property type="project" value="FlyBase"/>
</dbReference>
<dbReference type="InterPro" id="IPR026112">
    <property type="entry name" value="AMN"/>
</dbReference>
<dbReference type="PANTHER" id="PTHR14995">
    <property type="entry name" value="AMNIONLESS"/>
    <property type="match status" value="1"/>
</dbReference>
<dbReference type="PANTHER" id="PTHR14995:SF2">
    <property type="entry name" value="PROTEIN AMNIONLESS"/>
    <property type="match status" value="1"/>
</dbReference>
<dbReference type="Pfam" id="PF14828">
    <property type="entry name" value="Amnionless"/>
    <property type="match status" value="1"/>
</dbReference>
<keyword id="KW-1003">Cell membrane</keyword>
<keyword id="KW-0472">Membrane</keyword>
<keyword id="KW-0653">Protein transport</keyword>
<keyword id="KW-1185">Reference proteome</keyword>
<keyword id="KW-0732">Signal</keyword>
<keyword id="KW-0812">Transmembrane</keyword>
<keyword id="KW-1133">Transmembrane helix</keyword>
<keyword id="KW-0813">Transport</keyword>
<gene>
    <name evidence="7" type="primary">Amnionless</name>
    <name evidence="7" type="ORF">CG11592</name>
</gene>
<name>AMNLS_DROME</name>
<organism evidence="8">
    <name type="scientific">Drosophila melanogaster</name>
    <name type="common">Fruit fly</name>
    <dbReference type="NCBI Taxonomy" id="7227"/>
    <lineage>
        <taxon>Eukaryota</taxon>
        <taxon>Metazoa</taxon>
        <taxon>Ecdysozoa</taxon>
        <taxon>Arthropoda</taxon>
        <taxon>Hexapoda</taxon>
        <taxon>Insecta</taxon>
        <taxon>Pterygota</taxon>
        <taxon>Neoptera</taxon>
        <taxon>Endopterygota</taxon>
        <taxon>Diptera</taxon>
        <taxon>Brachycera</taxon>
        <taxon>Muscomorpha</taxon>
        <taxon>Ephydroidea</taxon>
        <taxon>Drosophilidae</taxon>
        <taxon>Drosophila</taxon>
        <taxon>Sophophora</taxon>
    </lineage>
</organism>
<sequence length="505" mass="56864">MGLHWQWLIWALVGLHVALATKWYGGGMDFNDPTAWLDDHLPCAQDLVVFPEYYPALLPLPEDISIDGLVFPREGAILLAEESTITFGSDKQPSCESDENKAYLKPPKSSKWFDPGTWTDKSKEFSTFTPELERIPCDDEQVIIKGHGPLAFDLENVQYLRLGQLILAGSSISKTYLEQLISRDLGQFLFYNAEYVQVEYYRGELCGCHKDFERLLEPVCHNVQEQCETPHCLSPVRPLGSCCLICGAILSTPTTHCTEGSRKELVAQISNLISQESLKDQIGLHVEFVGSQKFGNCLQAVVTDRHKYSERSLEFLQQNEHNWNKTGTTLKVSGRPYNPNVSFSSIVLILFCMALVGLVSVVILAHFMPENPYLNRIPQWIHDPRLWRWRHLGLRLRRNLLFNRFDNGGAEGGSSEGGASGVDRLGIMAYDPESGEVRERAFDNPMFEQGGALEEAAKESQEQDEILSVPKMETGDLDARSVVDEQELTEINLETCEADTDEETI</sequence>
<proteinExistence type="evidence at transcript level"/>
<comment type="function">
    <text evidence="3">Required in the nephrocyte for normal uptake of proteins and elimination of toxins, and for maintenance of endocytic trafficking structures. May function together with Cubn.</text>
</comment>
<comment type="subcellular location">
    <subcellularLocation>
        <location evidence="5">Cell membrane</location>
        <topology evidence="1">Single-pass type I membrane protein</topology>
    </subcellularLocation>
</comment>
<comment type="tissue specificity">
    <text evidence="3">Specifically expressed in nephrocytes.</text>
</comment>
<comment type="developmental stage">
    <text evidence="3">Detected only in garland nephrocytes at the embryonic stage. Highly expressed in both garland and pericardial nephrocytes at the larval stage.</text>
</comment>
<reference evidence="8" key="1">
    <citation type="journal article" date="2000" name="Science">
        <title>The genome sequence of Drosophila melanogaster.</title>
        <authorList>
            <person name="Adams M.D."/>
            <person name="Celniker S.E."/>
            <person name="Holt R.A."/>
            <person name="Evans C.A."/>
            <person name="Gocayne J.D."/>
            <person name="Amanatides P.G."/>
            <person name="Scherer S.E."/>
            <person name="Li P.W."/>
            <person name="Hoskins R.A."/>
            <person name="Galle R.F."/>
            <person name="George R.A."/>
            <person name="Lewis S.E."/>
            <person name="Richards S."/>
            <person name="Ashburner M."/>
            <person name="Henderson S.N."/>
            <person name="Sutton G.G."/>
            <person name="Wortman J.R."/>
            <person name="Yandell M.D."/>
            <person name="Zhang Q."/>
            <person name="Chen L.X."/>
            <person name="Brandon R.C."/>
            <person name="Rogers Y.-H.C."/>
            <person name="Blazej R.G."/>
            <person name="Champe M."/>
            <person name="Pfeiffer B.D."/>
            <person name="Wan K.H."/>
            <person name="Doyle C."/>
            <person name="Baxter E.G."/>
            <person name="Helt G."/>
            <person name="Nelson C.R."/>
            <person name="Miklos G.L.G."/>
            <person name="Abril J.F."/>
            <person name="Agbayani A."/>
            <person name="An H.-J."/>
            <person name="Andrews-Pfannkoch C."/>
            <person name="Baldwin D."/>
            <person name="Ballew R.M."/>
            <person name="Basu A."/>
            <person name="Baxendale J."/>
            <person name="Bayraktaroglu L."/>
            <person name="Beasley E.M."/>
            <person name="Beeson K.Y."/>
            <person name="Benos P.V."/>
            <person name="Berman B.P."/>
            <person name="Bhandari D."/>
            <person name="Bolshakov S."/>
            <person name="Borkova D."/>
            <person name="Botchan M.R."/>
            <person name="Bouck J."/>
            <person name="Brokstein P."/>
            <person name="Brottier P."/>
            <person name="Burtis K.C."/>
            <person name="Busam D.A."/>
            <person name="Butler H."/>
            <person name="Cadieu E."/>
            <person name="Center A."/>
            <person name="Chandra I."/>
            <person name="Cherry J.M."/>
            <person name="Cawley S."/>
            <person name="Dahlke C."/>
            <person name="Davenport L.B."/>
            <person name="Davies P."/>
            <person name="de Pablos B."/>
            <person name="Delcher A."/>
            <person name="Deng Z."/>
            <person name="Mays A.D."/>
            <person name="Dew I."/>
            <person name="Dietz S.M."/>
            <person name="Dodson K."/>
            <person name="Doup L.E."/>
            <person name="Downes M."/>
            <person name="Dugan-Rocha S."/>
            <person name="Dunkov B.C."/>
            <person name="Dunn P."/>
            <person name="Durbin K.J."/>
            <person name="Evangelista C.C."/>
            <person name="Ferraz C."/>
            <person name="Ferriera S."/>
            <person name="Fleischmann W."/>
            <person name="Fosler C."/>
            <person name="Gabrielian A.E."/>
            <person name="Garg N.S."/>
            <person name="Gelbart W.M."/>
            <person name="Glasser K."/>
            <person name="Glodek A."/>
            <person name="Gong F."/>
            <person name="Gorrell J.H."/>
            <person name="Gu Z."/>
            <person name="Guan P."/>
            <person name="Harris M."/>
            <person name="Harris N.L."/>
            <person name="Harvey D.A."/>
            <person name="Heiman T.J."/>
            <person name="Hernandez J.R."/>
            <person name="Houck J."/>
            <person name="Hostin D."/>
            <person name="Houston K.A."/>
            <person name="Howland T.J."/>
            <person name="Wei M.-H."/>
            <person name="Ibegwam C."/>
            <person name="Jalali M."/>
            <person name="Kalush F."/>
            <person name="Karpen G.H."/>
            <person name="Ke Z."/>
            <person name="Kennison J.A."/>
            <person name="Ketchum K.A."/>
            <person name="Kimmel B.E."/>
            <person name="Kodira C.D."/>
            <person name="Kraft C.L."/>
            <person name="Kravitz S."/>
            <person name="Kulp D."/>
            <person name="Lai Z."/>
            <person name="Lasko P."/>
            <person name="Lei Y."/>
            <person name="Levitsky A.A."/>
            <person name="Li J.H."/>
            <person name="Li Z."/>
            <person name="Liang Y."/>
            <person name="Lin X."/>
            <person name="Liu X."/>
            <person name="Mattei B."/>
            <person name="McIntosh T.C."/>
            <person name="McLeod M.P."/>
            <person name="McPherson D."/>
            <person name="Merkulov G."/>
            <person name="Milshina N.V."/>
            <person name="Mobarry C."/>
            <person name="Morris J."/>
            <person name="Moshrefi A."/>
            <person name="Mount S.M."/>
            <person name="Moy M."/>
            <person name="Murphy B."/>
            <person name="Murphy L."/>
            <person name="Muzny D.M."/>
            <person name="Nelson D.L."/>
            <person name="Nelson D.R."/>
            <person name="Nelson K.A."/>
            <person name="Nixon K."/>
            <person name="Nusskern D.R."/>
            <person name="Pacleb J.M."/>
            <person name="Palazzolo M."/>
            <person name="Pittman G.S."/>
            <person name="Pan S."/>
            <person name="Pollard J."/>
            <person name="Puri V."/>
            <person name="Reese M.G."/>
            <person name="Reinert K."/>
            <person name="Remington K."/>
            <person name="Saunders R.D.C."/>
            <person name="Scheeler F."/>
            <person name="Shen H."/>
            <person name="Shue B.C."/>
            <person name="Siden-Kiamos I."/>
            <person name="Simpson M."/>
            <person name="Skupski M.P."/>
            <person name="Smith T.J."/>
            <person name="Spier E."/>
            <person name="Spradling A.C."/>
            <person name="Stapleton M."/>
            <person name="Strong R."/>
            <person name="Sun E."/>
            <person name="Svirskas R."/>
            <person name="Tector C."/>
            <person name="Turner R."/>
            <person name="Venter E."/>
            <person name="Wang A.H."/>
            <person name="Wang X."/>
            <person name="Wang Z.-Y."/>
            <person name="Wassarman D.A."/>
            <person name="Weinstock G.M."/>
            <person name="Weissenbach J."/>
            <person name="Williams S.M."/>
            <person name="Woodage T."/>
            <person name="Worley K.C."/>
            <person name="Wu D."/>
            <person name="Yang S."/>
            <person name="Yao Q.A."/>
            <person name="Ye J."/>
            <person name="Yeh R.-F."/>
            <person name="Zaveri J.S."/>
            <person name="Zhan M."/>
            <person name="Zhang G."/>
            <person name="Zhao Q."/>
            <person name="Zheng L."/>
            <person name="Zheng X.H."/>
            <person name="Zhong F.N."/>
            <person name="Zhong W."/>
            <person name="Zhou X."/>
            <person name="Zhu S.C."/>
            <person name="Zhu X."/>
            <person name="Smith H.O."/>
            <person name="Gibbs R.A."/>
            <person name="Myers E.W."/>
            <person name="Rubin G.M."/>
            <person name="Venter J.C."/>
        </authorList>
    </citation>
    <scope>NUCLEOTIDE SEQUENCE [LARGE SCALE GENOMIC DNA]</scope>
    <source>
        <strain evidence="8">Berkeley</strain>
    </source>
</reference>
<reference evidence="8" key="2">
    <citation type="journal article" date="2002" name="Genome Biol.">
        <title>Annotation of the Drosophila melanogaster euchromatic genome: a systematic review.</title>
        <authorList>
            <person name="Misra S."/>
            <person name="Crosby M.A."/>
            <person name="Mungall C.J."/>
            <person name="Matthews B.B."/>
            <person name="Campbell K.S."/>
            <person name="Hradecky P."/>
            <person name="Huang Y."/>
            <person name="Kaminker J.S."/>
            <person name="Millburn G.H."/>
            <person name="Prochnik S.E."/>
            <person name="Smith C.D."/>
            <person name="Tupy J.L."/>
            <person name="Whitfield E.J."/>
            <person name="Bayraktaroglu L."/>
            <person name="Berman B.P."/>
            <person name="Bettencourt B.R."/>
            <person name="Celniker S.E."/>
            <person name="de Grey A.D.N.J."/>
            <person name="Drysdale R.A."/>
            <person name="Harris N.L."/>
            <person name="Richter J."/>
            <person name="Russo S."/>
            <person name="Schroeder A.J."/>
            <person name="Shu S.Q."/>
            <person name="Stapleton M."/>
            <person name="Yamada C."/>
            <person name="Ashburner M."/>
            <person name="Gelbart W.M."/>
            <person name="Rubin G.M."/>
            <person name="Lewis S.E."/>
        </authorList>
    </citation>
    <scope>GENOME REANNOTATION</scope>
    <source>
        <strain evidence="8">Berkeley</strain>
    </source>
</reference>
<reference evidence="6" key="3">
    <citation type="submission" date="2005-05" db="EMBL/GenBank/DDBJ databases">
        <authorList>
            <person name="Stapleton M."/>
            <person name="Carlson J."/>
            <person name="Chavez C."/>
            <person name="Frise E."/>
            <person name="George R."/>
            <person name="Pacleb J."/>
            <person name="Park S."/>
            <person name="Wan K."/>
            <person name="Yu C."/>
            <person name="Celniker S."/>
        </authorList>
    </citation>
    <scope>NUCLEOTIDE SEQUENCE [LARGE SCALE MRNA]</scope>
</reference>
<reference evidence="4" key="4">
    <citation type="journal article" date="2013" name="J. Am. Soc. Nephrol.">
        <title>Cubilin and amnionless mediate protein reabsorption in Drosophila nephrocytes.</title>
        <authorList>
            <person name="Zhang F."/>
            <person name="Zhao Y."/>
            <person name="Chao Y."/>
            <person name="Muir K."/>
            <person name="Han Z."/>
        </authorList>
    </citation>
    <scope>FUNCTION</scope>
    <scope>TISSUE SPECIFICITY</scope>
    <scope>DEVELOPMENTAL STAGE</scope>
</reference>
<protein>
    <recommendedName>
        <fullName evidence="4">Protein amnionless</fullName>
    </recommendedName>
</protein>
<evidence type="ECO:0000255" key="1"/>
<evidence type="ECO:0000256" key="2">
    <source>
        <dbReference type="SAM" id="MobiDB-lite"/>
    </source>
</evidence>
<evidence type="ECO:0000269" key="3">
    <source>
    </source>
</evidence>
<evidence type="ECO:0000305" key="4"/>
<evidence type="ECO:0000305" key="5">
    <source>
    </source>
</evidence>
<evidence type="ECO:0000312" key="6">
    <source>
        <dbReference type="EMBL" id="AAY55609.1"/>
    </source>
</evidence>
<evidence type="ECO:0000312" key="7">
    <source>
        <dbReference type="FlyBase" id="FBgn0025686"/>
    </source>
</evidence>
<evidence type="ECO:0000312" key="8">
    <source>
        <dbReference type="Proteomes" id="UP000000803"/>
    </source>
</evidence>
<feature type="signal peptide" evidence="1">
    <location>
        <begin position="1"/>
        <end position="20"/>
    </location>
</feature>
<feature type="chain" id="PRO_5006753003" description="Protein amnionless">
    <location>
        <begin position="21"/>
        <end position="505"/>
    </location>
</feature>
<feature type="topological domain" description="Extracellular" evidence="4">
    <location>
        <begin position="21"/>
        <end position="344"/>
    </location>
</feature>
<feature type="transmembrane region" description="Helical" evidence="1">
    <location>
        <begin position="345"/>
        <end position="365"/>
    </location>
</feature>
<feature type="topological domain" description="Cytoplasmic" evidence="4">
    <location>
        <begin position="366"/>
        <end position="505"/>
    </location>
</feature>
<feature type="region of interest" description="Disordered" evidence="2">
    <location>
        <begin position="451"/>
        <end position="482"/>
    </location>
</feature>
<feature type="compositionally biased region" description="Basic and acidic residues" evidence="2">
    <location>
        <begin position="473"/>
        <end position="482"/>
    </location>
</feature>
<accession>Q9VPN2</accession>